<proteinExistence type="predicted"/>
<feature type="chain" id="PRO_0000116896" description="Uncharacterized protein C569.04">
    <location>
        <begin position="1"/>
        <end position="121"/>
    </location>
</feature>
<accession>Q9Y7S3</accession>
<gene>
    <name type="ORF">SPCC569.04</name>
</gene>
<organism>
    <name type="scientific">Schizosaccharomyces pombe (strain 972 / ATCC 24843)</name>
    <name type="common">Fission yeast</name>
    <dbReference type="NCBI Taxonomy" id="284812"/>
    <lineage>
        <taxon>Eukaryota</taxon>
        <taxon>Fungi</taxon>
        <taxon>Dikarya</taxon>
        <taxon>Ascomycota</taxon>
        <taxon>Taphrinomycotina</taxon>
        <taxon>Schizosaccharomycetes</taxon>
        <taxon>Schizosaccharomycetales</taxon>
        <taxon>Schizosaccharomycetaceae</taxon>
        <taxon>Schizosaccharomyces</taxon>
    </lineage>
</organism>
<dbReference type="EMBL" id="CU329672">
    <property type="protein sequence ID" value="CAB42065.1"/>
    <property type="molecule type" value="Genomic_DNA"/>
</dbReference>
<dbReference type="PIR" id="T41406">
    <property type="entry name" value="T41406"/>
</dbReference>
<dbReference type="RefSeq" id="NP_588569.1">
    <property type="nucleotide sequence ID" value="NM_001023556.2"/>
</dbReference>
<dbReference type="BioGRID" id="275912">
    <property type="interactions" value="13"/>
</dbReference>
<dbReference type="PaxDb" id="4896-SPCC569.04.1"/>
<dbReference type="EnsemblFungi" id="SPCC569.04.1">
    <property type="protein sequence ID" value="SPCC569.04.1:pep"/>
    <property type="gene ID" value="SPCC569.04"/>
</dbReference>
<dbReference type="KEGG" id="spo:2539346"/>
<dbReference type="PomBase" id="SPCC569.04"/>
<dbReference type="VEuPathDB" id="FungiDB:SPCC569.04"/>
<dbReference type="HOGENOM" id="CLU_2039419_0_0_1"/>
<dbReference type="InParanoid" id="Q9Y7S3"/>
<dbReference type="PRO" id="PR:Q9Y7S3"/>
<dbReference type="Proteomes" id="UP000002485">
    <property type="component" value="Chromosome III"/>
</dbReference>
<keyword id="KW-1185">Reference proteome</keyword>
<name>YQO4_SCHPO</name>
<protein>
    <recommendedName>
        <fullName>Uncharacterized protein C569.04</fullName>
    </recommendedName>
</protein>
<reference key="1">
    <citation type="journal article" date="2002" name="Nature">
        <title>The genome sequence of Schizosaccharomyces pombe.</title>
        <authorList>
            <person name="Wood V."/>
            <person name="Gwilliam R."/>
            <person name="Rajandream M.A."/>
            <person name="Lyne M.H."/>
            <person name="Lyne R."/>
            <person name="Stewart A."/>
            <person name="Sgouros J.G."/>
            <person name="Peat N."/>
            <person name="Hayles J."/>
            <person name="Baker S.G."/>
            <person name="Basham D."/>
            <person name="Bowman S."/>
            <person name="Brooks K."/>
            <person name="Brown D."/>
            <person name="Brown S."/>
            <person name="Chillingworth T."/>
            <person name="Churcher C.M."/>
            <person name="Collins M."/>
            <person name="Connor R."/>
            <person name="Cronin A."/>
            <person name="Davis P."/>
            <person name="Feltwell T."/>
            <person name="Fraser A."/>
            <person name="Gentles S."/>
            <person name="Goble A."/>
            <person name="Hamlin N."/>
            <person name="Harris D.E."/>
            <person name="Hidalgo J."/>
            <person name="Hodgson G."/>
            <person name="Holroyd S."/>
            <person name="Hornsby T."/>
            <person name="Howarth S."/>
            <person name="Huckle E.J."/>
            <person name="Hunt S."/>
            <person name="Jagels K."/>
            <person name="James K.D."/>
            <person name="Jones L."/>
            <person name="Jones M."/>
            <person name="Leather S."/>
            <person name="McDonald S."/>
            <person name="McLean J."/>
            <person name="Mooney P."/>
            <person name="Moule S."/>
            <person name="Mungall K.L."/>
            <person name="Murphy L.D."/>
            <person name="Niblett D."/>
            <person name="Odell C."/>
            <person name="Oliver K."/>
            <person name="O'Neil S."/>
            <person name="Pearson D."/>
            <person name="Quail M.A."/>
            <person name="Rabbinowitsch E."/>
            <person name="Rutherford K.M."/>
            <person name="Rutter S."/>
            <person name="Saunders D."/>
            <person name="Seeger K."/>
            <person name="Sharp S."/>
            <person name="Skelton J."/>
            <person name="Simmonds M.N."/>
            <person name="Squares R."/>
            <person name="Squares S."/>
            <person name="Stevens K."/>
            <person name="Taylor K."/>
            <person name="Taylor R.G."/>
            <person name="Tivey A."/>
            <person name="Walsh S.V."/>
            <person name="Warren T."/>
            <person name="Whitehead S."/>
            <person name="Woodward J.R."/>
            <person name="Volckaert G."/>
            <person name="Aert R."/>
            <person name="Robben J."/>
            <person name="Grymonprez B."/>
            <person name="Weltjens I."/>
            <person name="Vanstreels E."/>
            <person name="Rieger M."/>
            <person name="Schaefer M."/>
            <person name="Mueller-Auer S."/>
            <person name="Gabel C."/>
            <person name="Fuchs M."/>
            <person name="Duesterhoeft A."/>
            <person name="Fritzc C."/>
            <person name="Holzer E."/>
            <person name="Moestl D."/>
            <person name="Hilbert H."/>
            <person name="Borzym K."/>
            <person name="Langer I."/>
            <person name="Beck A."/>
            <person name="Lehrach H."/>
            <person name="Reinhardt R."/>
            <person name="Pohl T.M."/>
            <person name="Eger P."/>
            <person name="Zimmermann W."/>
            <person name="Wedler H."/>
            <person name="Wambutt R."/>
            <person name="Purnelle B."/>
            <person name="Goffeau A."/>
            <person name="Cadieu E."/>
            <person name="Dreano S."/>
            <person name="Gloux S."/>
            <person name="Lelaure V."/>
            <person name="Mottier S."/>
            <person name="Galibert F."/>
            <person name="Aves S.J."/>
            <person name="Xiang Z."/>
            <person name="Hunt C."/>
            <person name="Moore K."/>
            <person name="Hurst S.M."/>
            <person name="Lucas M."/>
            <person name="Rochet M."/>
            <person name="Gaillardin C."/>
            <person name="Tallada V.A."/>
            <person name="Garzon A."/>
            <person name="Thode G."/>
            <person name="Daga R.R."/>
            <person name="Cruzado L."/>
            <person name="Jimenez J."/>
            <person name="Sanchez M."/>
            <person name="del Rey F."/>
            <person name="Benito J."/>
            <person name="Dominguez A."/>
            <person name="Revuelta J.L."/>
            <person name="Moreno S."/>
            <person name="Armstrong J."/>
            <person name="Forsburg S.L."/>
            <person name="Cerutti L."/>
            <person name="Lowe T."/>
            <person name="McCombie W.R."/>
            <person name="Paulsen I."/>
            <person name="Potashkin J."/>
            <person name="Shpakovski G.V."/>
            <person name="Ussery D."/>
            <person name="Barrell B.G."/>
            <person name="Nurse P."/>
        </authorList>
    </citation>
    <scope>NUCLEOTIDE SEQUENCE [LARGE SCALE GENOMIC DNA]</scope>
    <source>
        <strain>972 / ATCC 24843</strain>
    </source>
</reference>
<sequence length="121" mass="14262">MSTSYLCDENRKGENRKVEIQELVPYLYSVLLRGVPSRPVFDSRLKFAVKVPVYPKRPLYTTDTRTHYYLKNCFRILEWEIVSHVGGNELLINRRVIDVNNFFICQDANSGPFCTAWRFTH</sequence>